<geneLocation type="plasmid">
    <name>pNRC200</name>
</geneLocation>
<keyword id="KW-0175">Coiled coil</keyword>
<keyword id="KW-0963">Cytoplasm</keyword>
<keyword id="KW-0614">Plasmid</keyword>
<keyword id="KW-1185">Reference proteome</keyword>
<name>SPH2_HALSA</name>
<protein>
    <recommendedName>
        <fullName>Smc-like protein Sph2</fullName>
    </recommendedName>
</protein>
<gene>
    <name type="primary">sph2</name>
    <name type="ordered locus">VNG_6173C</name>
</gene>
<reference key="1">
    <citation type="journal article" date="2000" name="Proc. Natl. Acad. Sci. U.S.A.">
        <title>Genome sequence of Halobacterium species NRC-1.</title>
        <authorList>
            <person name="Ng W.V."/>
            <person name="Kennedy S.P."/>
            <person name="Mahairas G.G."/>
            <person name="Berquist B."/>
            <person name="Pan M."/>
            <person name="Shukla H.D."/>
            <person name="Lasky S.R."/>
            <person name="Baliga N.S."/>
            <person name="Thorsson V."/>
            <person name="Sbrogna J."/>
            <person name="Swartzell S."/>
            <person name="Weir D."/>
            <person name="Hall J."/>
            <person name="Dahl T.A."/>
            <person name="Welti R."/>
            <person name="Goo Y.A."/>
            <person name="Leithauser B."/>
            <person name="Keller K."/>
            <person name="Cruz R."/>
            <person name="Danson M.J."/>
            <person name="Hough D.W."/>
            <person name="Maddocks D.G."/>
            <person name="Jablonski P.E."/>
            <person name="Krebs M.P."/>
            <person name="Angevine C.M."/>
            <person name="Dale H."/>
            <person name="Isenbarger T.A."/>
            <person name="Peck R.F."/>
            <person name="Pohlschroder M."/>
            <person name="Spudich J.L."/>
            <person name="Jung K.-H."/>
            <person name="Alam M."/>
            <person name="Freitas T."/>
            <person name="Hou S."/>
            <person name="Daniels C.J."/>
            <person name="Dennis P.P."/>
            <person name="Omer A.D."/>
            <person name="Ebhardt H."/>
            <person name="Lowe T.M."/>
            <person name="Liang P."/>
            <person name="Riley M."/>
            <person name="Hood L."/>
            <person name="DasSarma S."/>
        </authorList>
    </citation>
    <scope>NUCLEOTIDE SEQUENCE [LARGE SCALE GENOMIC DNA]</scope>
    <source>
        <strain>ATCC 700922 / JCM 11081 / NRC-1</strain>
    </source>
</reference>
<sequence>METNAVSLIYRCRVGERMSQHDTDGRVSVYAENIGGISQCDVTFKPGVNVLRGRNATGRTSLLNGLAGVLGGTAPVLKGDEQEAEVRLEFNGTTYDQQYTRKNGTVQAAGQPVTERRDLVDLFVCLTAENPARRAIVQDGNLRDVIMRPVDTGSIQRRIEDLQSERNRIGQRIRAIEDDLDQRTSLTSRKTTLVSDLDECDQEIEELRNQLEQFDADPEEAEEIEQALTSLEERKQELESITNRIRTQEDTREALRDEQSELQTEREAIETSEEELKRIETRLSELTSRERSLATTINDLSAIVDFNEDLVSNADSDLLRSGDAAESPVSKLNPMSETVECWTCGTEVERNRIAGRLDDLRDLVDEKRTERSEVQTEIEELRESQQELQEVIHRRDEIGQRLSEISSEIAQRDQTLESLSEEREDVHQRLSELEEFVSEREALQESELTEQYQQLSELEYQRGQLEEELSAVREELAELDRLENERDQLQAQQDEIQAELVSQRTQIRDLEESAITAFNDHMEEILDVLRYKNIARVWIERKEGAEFNSSHGGYRGGSATKFELHVVRETDEGRGYEDTVQSLSESEREVVGLVVALAGYLVHDVYEVIPMMLLDSLEAIDADRIAALVDYFADYAPYLIVALLPEDADALGGDETSVVPASFASEE</sequence>
<proteinExistence type="inferred from homology"/>
<organism>
    <name type="scientific">Halobacterium salinarum (strain ATCC 700922 / JCM 11081 / NRC-1)</name>
    <name type="common">Halobacterium halobium</name>
    <dbReference type="NCBI Taxonomy" id="64091"/>
    <lineage>
        <taxon>Archaea</taxon>
        <taxon>Methanobacteriati</taxon>
        <taxon>Methanobacteriota</taxon>
        <taxon>Stenosarchaea group</taxon>
        <taxon>Halobacteria</taxon>
        <taxon>Halobacteriales</taxon>
        <taxon>Halobacteriaceae</taxon>
        <taxon>Halobacterium</taxon>
        <taxon>Halobacterium salinarum NRC-34001</taxon>
    </lineage>
</organism>
<dbReference type="EMBL" id="AE004438">
    <property type="protein sequence ID" value="AAG20841.1"/>
    <property type="molecule type" value="Genomic_DNA"/>
</dbReference>
<dbReference type="RefSeq" id="WP_010904054.1">
    <property type="nucleotide sequence ID" value="NZ_BK010831.1"/>
</dbReference>
<dbReference type="SMR" id="Q9HHY2"/>
<dbReference type="KEGG" id="hal:VNG_6173C"/>
<dbReference type="PATRIC" id="fig|64091.14.peg.2198"/>
<dbReference type="HOGENOM" id="CLU_409187_0_0_2"/>
<dbReference type="InParanoid" id="Q9HHY2"/>
<dbReference type="OrthoDB" id="241568at2157"/>
<dbReference type="PhylomeDB" id="Q9HHY2"/>
<dbReference type="Proteomes" id="UP000000554">
    <property type="component" value="Plasmid pNRC200"/>
</dbReference>
<dbReference type="GO" id="GO:0005737">
    <property type="term" value="C:cytoplasm"/>
    <property type="evidence" value="ECO:0007669"/>
    <property type="project" value="UniProtKB-SubCell"/>
</dbReference>
<dbReference type="GO" id="GO:0016887">
    <property type="term" value="F:ATP hydrolysis activity"/>
    <property type="evidence" value="ECO:0007669"/>
    <property type="project" value="InterPro"/>
</dbReference>
<dbReference type="GO" id="GO:0006302">
    <property type="term" value="P:double-strand break repair"/>
    <property type="evidence" value="ECO:0007669"/>
    <property type="project" value="InterPro"/>
</dbReference>
<dbReference type="Gene3D" id="3.40.50.300">
    <property type="entry name" value="P-loop containing nucleotide triphosphate hydrolases"/>
    <property type="match status" value="2"/>
</dbReference>
<dbReference type="InterPro" id="IPR027417">
    <property type="entry name" value="P-loop_NTPase"/>
</dbReference>
<dbReference type="InterPro" id="IPR038729">
    <property type="entry name" value="Rad50/SbcC_AAA"/>
</dbReference>
<dbReference type="NCBIfam" id="NF045487">
    <property type="entry name" value="ASRP"/>
    <property type="match status" value="1"/>
</dbReference>
<dbReference type="PANTHER" id="PTHR32114">
    <property type="entry name" value="ABC TRANSPORTER ABCH.3"/>
    <property type="match status" value="1"/>
</dbReference>
<dbReference type="PANTHER" id="PTHR32114:SF2">
    <property type="entry name" value="ABC TRANSPORTER ABCH.3"/>
    <property type="match status" value="1"/>
</dbReference>
<dbReference type="Pfam" id="PF13476">
    <property type="entry name" value="AAA_23"/>
    <property type="match status" value="1"/>
</dbReference>
<dbReference type="SUPFAM" id="SSF52540">
    <property type="entry name" value="P-loop containing nucleoside triphosphate hydrolases"/>
    <property type="match status" value="1"/>
</dbReference>
<feature type="chain" id="PRO_0000409227" description="Smc-like protein Sph2">
    <location>
        <begin position="1"/>
        <end position="667"/>
    </location>
</feature>
<feature type="coiled-coil region" evidence="2">
    <location>
        <begin position="153"/>
        <end position="295"/>
    </location>
</feature>
<feature type="coiled-coil region" evidence="2">
    <location>
        <begin position="355"/>
        <end position="517"/>
    </location>
</feature>
<evidence type="ECO:0000250" key="1"/>
<evidence type="ECO:0000255" key="2"/>
<evidence type="ECO:0000305" key="3"/>
<comment type="function">
    <text evidence="1">May play a role in replication.</text>
</comment>
<comment type="subcellular location">
    <subcellularLocation>
        <location evidence="1">Cytoplasm</location>
    </subcellularLocation>
</comment>
<comment type="similarity">
    <text evidence="3">Belongs to the Sph1/Sph2 family.</text>
</comment>
<accession>Q9HHY2</accession>